<dbReference type="EMBL" id="AF158101">
    <property type="protein sequence ID" value="AAD42620.1"/>
    <property type="molecule type" value="Genomic_DNA"/>
</dbReference>
<dbReference type="RefSeq" id="NP_049884.1">
    <property type="nucleotide sequence ID" value="NC_000866.4"/>
</dbReference>
<dbReference type="SMR" id="P39249"/>
<dbReference type="GeneID" id="1258678"/>
<dbReference type="KEGG" id="vg:1258678"/>
<dbReference type="OrthoDB" id="28394at10239"/>
<dbReference type="Proteomes" id="UP000009087">
    <property type="component" value="Segment"/>
</dbReference>
<reference key="1">
    <citation type="journal article" date="2003" name="Microbiol. Mol. Biol. Rev.">
        <title>Bacteriophage T4 genome.</title>
        <authorList>
            <person name="Miller E.S."/>
            <person name="Kutter E."/>
            <person name="Mosig G."/>
            <person name="Arisaka F."/>
            <person name="Kunisawa T."/>
            <person name="Ruger W."/>
        </authorList>
    </citation>
    <scope>NUCLEOTIDE SEQUENCE [LARGE SCALE GENOMIC DNA]</scope>
</reference>
<organismHost>
    <name type="scientific">Escherichia coli</name>
    <dbReference type="NCBI Taxonomy" id="562"/>
</organismHost>
<organism>
    <name type="scientific">Enterobacteria phage T4</name>
    <name type="common">Bacteriophage T4</name>
    <dbReference type="NCBI Taxonomy" id="10665"/>
    <lineage>
        <taxon>Viruses</taxon>
        <taxon>Duplodnaviria</taxon>
        <taxon>Heunggongvirae</taxon>
        <taxon>Uroviricota</taxon>
        <taxon>Caudoviricetes</taxon>
        <taxon>Straboviridae</taxon>
        <taxon>Tevenvirinae</taxon>
        <taxon>Tequatrovirus</taxon>
    </lineage>
</organism>
<sequence length="42" mass="4954">MEEQKMKKIIKAIWNVVIILIVLSIFPIVLMIDVLNVYFGFM</sequence>
<protein>
    <recommendedName>
        <fullName>Uncharacterized 5.0 kDa protein in ndd-denB intergenic region</fullName>
    </recommendedName>
</protein>
<gene>
    <name type="primary">y16N</name>
    <name type="synonym">ndd.4</name>
</gene>
<accession>P39249</accession>
<accession>Q9T0S4</accession>
<keyword id="KW-1185">Reference proteome</keyword>
<name>Y16N_BPT4</name>
<feature type="chain" id="PRO_0000165210" description="Uncharacterized 5.0 kDa protein in ndd-denB intergenic region">
    <location>
        <begin position="1"/>
        <end position="42"/>
    </location>
</feature>
<proteinExistence type="predicted"/>